<keyword id="KW-1003">Cell membrane</keyword>
<keyword id="KW-0472">Membrane</keyword>
<keyword id="KW-0812">Transmembrane</keyword>
<keyword id="KW-1133">Transmembrane helix</keyword>
<feature type="chain" id="PRO_0000156911" description="UPF0056 membrane protein BUsg_434">
    <location>
        <begin position="1"/>
        <end position="196"/>
    </location>
</feature>
<feature type="transmembrane region" description="Helical" evidence="1">
    <location>
        <begin position="8"/>
        <end position="28"/>
    </location>
</feature>
<feature type="transmembrane region" description="Helical" evidence="1">
    <location>
        <begin position="45"/>
        <end position="65"/>
    </location>
</feature>
<feature type="transmembrane region" description="Helical" evidence="1">
    <location>
        <begin position="71"/>
        <end position="91"/>
    </location>
</feature>
<feature type="transmembrane region" description="Helical" evidence="1">
    <location>
        <begin position="105"/>
        <end position="125"/>
    </location>
</feature>
<feature type="transmembrane region" description="Helical" evidence="1">
    <location>
        <begin position="134"/>
        <end position="154"/>
    </location>
</feature>
<feature type="transmembrane region" description="Helical" evidence="1">
    <location>
        <begin position="174"/>
        <end position="194"/>
    </location>
</feature>
<organism>
    <name type="scientific">Buchnera aphidicola subsp. Schizaphis graminum (strain Sg)</name>
    <dbReference type="NCBI Taxonomy" id="198804"/>
    <lineage>
        <taxon>Bacteria</taxon>
        <taxon>Pseudomonadati</taxon>
        <taxon>Pseudomonadota</taxon>
        <taxon>Gammaproteobacteria</taxon>
        <taxon>Enterobacterales</taxon>
        <taxon>Erwiniaceae</taxon>
        <taxon>Buchnera</taxon>
    </lineage>
</organism>
<gene>
    <name type="ordered locus">BUsg_434</name>
</gene>
<evidence type="ECO:0000255" key="1"/>
<evidence type="ECO:0000305" key="2"/>
<dbReference type="EMBL" id="AE013218">
    <property type="protein sequence ID" value="AAM67977.1"/>
    <property type="molecule type" value="Genomic_DNA"/>
</dbReference>
<dbReference type="RefSeq" id="WP_011053944.1">
    <property type="nucleotide sequence ID" value="NC_004061.1"/>
</dbReference>
<dbReference type="STRING" id="198804.BUsg_434"/>
<dbReference type="GeneID" id="93003906"/>
<dbReference type="KEGG" id="bas:BUsg_434"/>
<dbReference type="eggNOG" id="COG2095">
    <property type="taxonomic scope" value="Bacteria"/>
</dbReference>
<dbReference type="HOGENOM" id="CLU_079909_1_1_6"/>
<dbReference type="Proteomes" id="UP000000416">
    <property type="component" value="Chromosome"/>
</dbReference>
<dbReference type="GO" id="GO:0005886">
    <property type="term" value="C:plasma membrane"/>
    <property type="evidence" value="ECO:0007669"/>
    <property type="project" value="UniProtKB-SubCell"/>
</dbReference>
<dbReference type="InterPro" id="IPR002771">
    <property type="entry name" value="Multi_antbiot-R_MarC"/>
</dbReference>
<dbReference type="NCBIfam" id="TIGR00427">
    <property type="entry name" value="NAAT family transporter"/>
    <property type="match status" value="1"/>
</dbReference>
<dbReference type="NCBIfam" id="NF008010">
    <property type="entry name" value="PRK10739.1"/>
    <property type="match status" value="1"/>
</dbReference>
<dbReference type="PANTHER" id="PTHR33508:SF10">
    <property type="entry name" value="UPF0056 INNER MEMBRANE PROTEIN YHGN"/>
    <property type="match status" value="1"/>
</dbReference>
<dbReference type="PANTHER" id="PTHR33508">
    <property type="entry name" value="UPF0056 MEMBRANE PROTEIN YHCE"/>
    <property type="match status" value="1"/>
</dbReference>
<dbReference type="Pfam" id="PF01914">
    <property type="entry name" value="MarC"/>
    <property type="match status" value="1"/>
</dbReference>
<accession>Q8K9B4</accession>
<sequence>MNEIISTTILLILIMDPLGNLPIFMTILKKLDAKRRRIVVIREMIIALIVMLIFLFVGEKILTILNLKTETVSISGGIILFLIAIKMIFPSDEGNNGTSSEEEPFLVPLAIPLVAGPSLLATLMLLSHQYLHHMPYLVGSLLIAWFFTIIILLLSGLFLKLFGDKGVNALERLMGLILIMLSTQMFLDGIKAWFKN</sequence>
<name>Y434_BUCAP</name>
<proteinExistence type="inferred from homology"/>
<reference key="1">
    <citation type="journal article" date="2002" name="Science">
        <title>50 million years of genomic stasis in endosymbiotic bacteria.</title>
        <authorList>
            <person name="Tamas I."/>
            <person name="Klasson L."/>
            <person name="Canbaeck B."/>
            <person name="Naeslund A.K."/>
            <person name="Eriksson A.-S."/>
            <person name="Wernegreen J.J."/>
            <person name="Sandstroem J.P."/>
            <person name="Moran N.A."/>
            <person name="Andersson S.G.E."/>
        </authorList>
    </citation>
    <scope>NUCLEOTIDE SEQUENCE [LARGE SCALE GENOMIC DNA]</scope>
    <source>
        <strain>Sg</strain>
    </source>
</reference>
<comment type="subcellular location">
    <subcellularLocation>
        <location evidence="2">Cell membrane</location>
        <topology evidence="2">Multi-pass membrane protein</topology>
    </subcellularLocation>
</comment>
<comment type="similarity">
    <text evidence="2">Belongs to the UPF0056 (MarC) family.</text>
</comment>
<protein>
    <recommendedName>
        <fullName>UPF0056 membrane protein BUsg_434</fullName>
    </recommendedName>
</protein>